<protein>
    <recommendedName>
        <fullName>rRNA biogenesis protein rrp36</fullName>
    </recommendedName>
    <alternativeName>
        <fullName>Ribosomal RNA-processing protein 36</fullName>
    </alternativeName>
</protein>
<proteinExistence type="evidence at protein level"/>
<reference key="1">
    <citation type="journal article" date="2002" name="Nature">
        <title>The genome sequence of Schizosaccharomyces pombe.</title>
        <authorList>
            <person name="Wood V."/>
            <person name="Gwilliam R."/>
            <person name="Rajandream M.A."/>
            <person name="Lyne M.H."/>
            <person name="Lyne R."/>
            <person name="Stewart A."/>
            <person name="Sgouros J.G."/>
            <person name="Peat N."/>
            <person name="Hayles J."/>
            <person name="Baker S.G."/>
            <person name="Basham D."/>
            <person name="Bowman S."/>
            <person name="Brooks K."/>
            <person name="Brown D."/>
            <person name="Brown S."/>
            <person name="Chillingworth T."/>
            <person name="Churcher C.M."/>
            <person name="Collins M."/>
            <person name="Connor R."/>
            <person name="Cronin A."/>
            <person name="Davis P."/>
            <person name="Feltwell T."/>
            <person name="Fraser A."/>
            <person name="Gentles S."/>
            <person name="Goble A."/>
            <person name="Hamlin N."/>
            <person name="Harris D.E."/>
            <person name="Hidalgo J."/>
            <person name="Hodgson G."/>
            <person name="Holroyd S."/>
            <person name="Hornsby T."/>
            <person name="Howarth S."/>
            <person name="Huckle E.J."/>
            <person name="Hunt S."/>
            <person name="Jagels K."/>
            <person name="James K.D."/>
            <person name="Jones L."/>
            <person name="Jones M."/>
            <person name="Leather S."/>
            <person name="McDonald S."/>
            <person name="McLean J."/>
            <person name="Mooney P."/>
            <person name="Moule S."/>
            <person name="Mungall K.L."/>
            <person name="Murphy L.D."/>
            <person name="Niblett D."/>
            <person name="Odell C."/>
            <person name="Oliver K."/>
            <person name="O'Neil S."/>
            <person name="Pearson D."/>
            <person name="Quail M.A."/>
            <person name="Rabbinowitsch E."/>
            <person name="Rutherford K.M."/>
            <person name="Rutter S."/>
            <person name="Saunders D."/>
            <person name="Seeger K."/>
            <person name="Sharp S."/>
            <person name="Skelton J."/>
            <person name="Simmonds M.N."/>
            <person name="Squares R."/>
            <person name="Squares S."/>
            <person name="Stevens K."/>
            <person name="Taylor K."/>
            <person name="Taylor R.G."/>
            <person name="Tivey A."/>
            <person name="Walsh S.V."/>
            <person name="Warren T."/>
            <person name="Whitehead S."/>
            <person name="Woodward J.R."/>
            <person name="Volckaert G."/>
            <person name="Aert R."/>
            <person name="Robben J."/>
            <person name="Grymonprez B."/>
            <person name="Weltjens I."/>
            <person name="Vanstreels E."/>
            <person name="Rieger M."/>
            <person name="Schaefer M."/>
            <person name="Mueller-Auer S."/>
            <person name="Gabel C."/>
            <person name="Fuchs M."/>
            <person name="Duesterhoeft A."/>
            <person name="Fritzc C."/>
            <person name="Holzer E."/>
            <person name="Moestl D."/>
            <person name="Hilbert H."/>
            <person name="Borzym K."/>
            <person name="Langer I."/>
            <person name="Beck A."/>
            <person name="Lehrach H."/>
            <person name="Reinhardt R."/>
            <person name="Pohl T.M."/>
            <person name="Eger P."/>
            <person name="Zimmermann W."/>
            <person name="Wedler H."/>
            <person name="Wambutt R."/>
            <person name="Purnelle B."/>
            <person name="Goffeau A."/>
            <person name="Cadieu E."/>
            <person name="Dreano S."/>
            <person name="Gloux S."/>
            <person name="Lelaure V."/>
            <person name="Mottier S."/>
            <person name="Galibert F."/>
            <person name="Aves S.J."/>
            <person name="Xiang Z."/>
            <person name="Hunt C."/>
            <person name="Moore K."/>
            <person name="Hurst S.M."/>
            <person name="Lucas M."/>
            <person name="Rochet M."/>
            <person name="Gaillardin C."/>
            <person name="Tallada V.A."/>
            <person name="Garzon A."/>
            <person name="Thode G."/>
            <person name="Daga R.R."/>
            <person name="Cruzado L."/>
            <person name="Jimenez J."/>
            <person name="Sanchez M."/>
            <person name="del Rey F."/>
            <person name="Benito J."/>
            <person name="Dominguez A."/>
            <person name="Revuelta J.L."/>
            <person name="Moreno S."/>
            <person name="Armstrong J."/>
            <person name="Forsburg S.L."/>
            <person name="Cerutti L."/>
            <person name="Lowe T."/>
            <person name="McCombie W.R."/>
            <person name="Paulsen I."/>
            <person name="Potashkin J."/>
            <person name="Shpakovski G.V."/>
            <person name="Ussery D."/>
            <person name="Barrell B.G."/>
            <person name="Nurse P."/>
        </authorList>
    </citation>
    <scope>NUCLEOTIDE SEQUENCE [LARGE SCALE GENOMIC DNA]</scope>
    <source>
        <strain>972 / ATCC 24843</strain>
    </source>
</reference>
<reference key="2">
    <citation type="journal article" date="2006" name="Nat. Biotechnol.">
        <title>ORFeome cloning and global analysis of protein localization in the fission yeast Schizosaccharomyces pombe.</title>
        <authorList>
            <person name="Matsuyama A."/>
            <person name="Arai R."/>
            <person name="Yashiroda Y."/>
            <person name="Shirai A."/>
            <person name="Kamata A."/>
            <person name="Sekido S."/>
            <person name="Kobayashi Y."/>
            <person name="Hashimoto A."/>
            <person name="Hamamoto M."/>
            <person name="Hiraoka Y."/>
            <person name="Horinouchi S."/>
            <person name="Yoshida M."/>
        </authorList>
    </citation>
    <scope>SUBCELLULAR LOCATION [LARGE SCALE ANALYSIS]</scope>
</reference>
<reference key="3">
    <citation type="journal article" date="2011" name="Genetics">
        <title>Augmented annotation of the Schizosaccharomyces pombe genome reveals additional genes required for growth and viability.</title>
        <authorList>
            <person name="Bitton D.A."/>
            <person name="Wood V."/>
            <person name="Scutt P.J."/>
            <person name="Grallert A."/>
            <person name="Yates T."/>
            <person name="Smith D.L."/>
            <person name="Hagan I.M."/>
            <person name="Miller C.J."/>
        </authorList>
    </citation>
    <scope>REVISION OF GENE MODEL</scope>
    <scope>IDENTIFICATION BY MASS SPECTROMETRY</scope>
</reference>
<name>RRP36_SCHPO</name>
<organism>
    <name type="scientific">Schizosaccharomyces pombe (strain 972 / ATCC 24843)</name>
    <name type="common">Fission yeast</name>
    <dbReference type="NCBI Taxonomy" id="284812"/>
    <lineage>
        <taxon>Eukaryota</taxon>
        <taxon>Fungi</taxon>
        <taxon>Dikarya</taxon>
        <taxon>Ascomycota</taxon>
        <taxon>Taphrinomycotina</taxon>
        <taxon>Schizosaccharomycetes</taxon>
        <taxon>Schizosaccharomycetales</taxon>
        <taxon>Schizosaccharomycetaceae</taxon>
        <taxon>Schizosaccharomyces</taxon>
    </lineage>
</organism>
<evidence type="ECO:0000250" key="1"/>
<evidence type="ECO:0000255" key="2"/>
<evidence type="ECO:0000256" key="3">
    <source>
        <dbReference type="SAM" id="MobiDB-lite"/>
    </source>
</evidence>
<evidence type="ECO:0000269" key="4">
    <source>
    </source>
</evidence>
<evidence type="ECO:0000305" key="5"/>
<feature type="chain" id="PRO_0000339880" description="rRNA biogenesis protein rrp36">
    <location>
        <begin position="1"/>
        <end position="265"/>
    </location>
</feature>
<feature type="region of interest" description="Disordered" evidence="3">
    <location>
        <begin position="1"/>
        <end position="59"/>
    </location>
</feature>
<feature type="region of interest" description="Disordered" evidence="3">
    <location>
        <begin position="231"/>
        <end position="265"/>
    </location>
</feature>
<feature type="coiled-coil region" evidence="2">
    <location>
        <begin position="146"/>
        <end position="204"/>
    </location>
</feature>
<feature type="compositionally biased region" description="Polar residues" evidence="3">
    <location>
        <begin position="1"/>
        <end position="11"/>
    </location>
</feature>
<feature type="compositionally biased region" description="Acidic residues" evidence="3">
    <location>
        <begin position="17"/>
        <end position="48"/>
    </location>
</feature>
<feature type="compositionally biased region" description="Basic residues" evidence="3">
    <location>
        <begin position="239"/>
        <end position="255"/>
    </location>
</feature>
<sequence length="265" mass="31342">MKSSSLENGTLANAGVYEDDLDSDEELVSEEEFENFNNEDSEDDEDSNNESKTAKSQLAEIPFDTLLNAQRDLLKEQQKTKIDRKNMKHTEKVDKKFLAKERNTPLKNCQVKNQFLVFAKFDSLSGNLSKDKVKKNYGFLNEYRVSEIQQLRDELKICKDQERAESIRQTLKSLLSKMERHLEEERAERVMHEFRAQEKERVKEGKKPFYLKRNEQKKLIQMDKYKSMEGTKALDKYIEKKRRRRAQKEKKHLPRARPSANSQNK</sequence>
<accession>Q9P6P2</accession>
<keyword id="KW-0175">Coiled coil</keyword>
<keyword id="KW-0539">Nucleus</keyword>
<keyword id="KW-1185">Reference proteome</keyword>
<keyword id="KW-0687">Ribonucleoprotein</keyword>
<keyword id="KW-0690">Ribosome biogenesis</keyword>
<keyword id="KW-0698">rRNA processing</keyword>
<comment type="function">
    <text evidence="1">Component of the 90S pre-ribosome involved in the maturation of rRNAs. Required for early cleavages of the pre-RNAs in the 40S ribosomal subunit maturation pathway (By similarity).</text>
</comment>
<comment type="subunit">
    <text evidence="1">Associates with 90S and pre-40S pre-ribosomal particles.</text>
</comment>
<comment type="subcellular location">
    <subcellularLocation>
        <location evidence="4">Nucleus</location>
        <location evidence="4">Nucleolus</location>
    </subcellularLocation>
</comment>
<comment type="similarity">
    <text evidence="5">Belongs to the RRP36 family.</text>
</comment>
<dbReference type="EMBL" id="CU329670">
    <property type="protein sequence ID" value="CAB90149.3"/>
    <property type="molecule type" value="Genomic_DNA"/>
</dbReference>
<dbReference type="RefSeq" id="NP_593831.3">
    <property type="nucleotide sequence ID" value="NM_001019260.3"/>
</dbReference>
<dbReference type="SMR" id="Q9P6P2"/>
<dbReference type="BioGRID" id="279825">
    <property type="interactions" value="1"/>
</dbReference>
<dbReference type="FunCoup" id="Q9P6P2">
    <property type="interactions" value="343"/>
</dbReference>
<dbReference type="STRING" id="284812.Q9P6P2"/>
<dbReference type="iPTMnet" id="Q9P6P2"/>
<dbReference type="PaxDb" id="4896-SPAC823.04.1"/>
<dbReference type="EnsemblFungi" id="SPAC823.04.1">
    <property type="protein sequence ID" value="SPAC823.04.1:pep"/>
    <property type="gene ID" value="SPAC823.04"/>
</dbReference>
<dbReference type="PomBase" id="SPAC823.04">
    <property type="gene designation" value="rrp36"/>
</dbReference>
<dbReference type="VEuPathDB" id="FungiDB:SPAC823.04"/>
<dbReference type="eggNOG" id="KOG3190">
    <property type="taxonomic scope" value="Eukaryota"/>
</dbReference>
<dbReference type="HOGENOM" id="CLU_048802_4_2_1"/>
<dbReference type="InParanoid" id="Q9P6P2"/>
<dbReference type="OMA" id="APWETIE"/>
<dbReference type="Reactome" id="R-SPO-6791226">
    <property type="pathway name" value="Major pathway of rRNA processing in the nucleolus and cytosol"/>
</dbReference>
<dbReference type="PRO" id="PR:Q9P6P2"/>
<dbReference type="Proteomes" id="UP000002485">
    <property type="component" value="Chromosome I"/>
</dbReference>
<dbReference type="GO" id="GO:0030686">
    <property type="term" value="C:90S preribosome"/>
    <property type="evidence" value="ECO:0000318"/>
    <property type="project" value="GO_Central"/>
</dbReference>
<dbReference type="GO" id="GO:0005730">
    <property type="term" value="C:nucleolus"/>
    <property type="evidence" value="ECO:0007005"/>
    <property type="project" value="PomBase"/>
</dbReference>
<dbReference type="GO" id="GO:0005634">
    <property type="term" value="C:nucleus"/>
    <property type="evidence" value="ECO:0007005"/>
    <property type="project" value="PomBase"/>
</dbReference>
<dbReference type="GO" id="GO:0000462">
    <property type="term" value="P:maturation of SSU-rRNA from tricistronic rRNA transcript (SSU-rRNA, 5.8S rRNA, LSU-rRNA)"/>
    <property type="evidence" value="ECO:0000318"/>
    <property type="project" value="GO_Central"/>
</dbReference>
<dbReference type="InterPro" id="IPR009292">
    <property type="entry name" value="RRP36"/>
</dbReference>
<dbReference type="PANTHER" id="PTHR21738">
    <property type="entry name" value="RIBOSOMAL RNA PROCESSING PROTEIN 36 HOMOLOG"/>
    <property type="match status" value="1"/>
</dbReference>
<dbReference type="PANTHER" id="PTHR21738:SF0">
    <property type="entry name" value="RIBOSOMAL RNA PROCESSING PROTEIN 36 HOMOLOG"/>
    <property type="match status" value="1"/>
</dbReference>
<dbReference type="Pfam" id="PF06102">
    <property type="entry name" value="RRP36"/>
    <property type="match status" value="1"/>
</dbReference>
<gene>
    <name type="primary">rrp36</name>
    <name type="ORF">SPAC823.04</name>
</gene>